<name>TRUA_SHEB2</name>
<protein>
    <recommendedName>
        <fullName evidence="1">tRNA pseudouridine synthase A</fullName>
        <ecNumber evidence="1">5.4.99.12</ecNumber>
    </recommendedName>
    <alternativeName>
        <fullName evidence="1">tRNA pseudouridine(38-40) synthase</fullName>
    </alternativeName>
    <alternativeName>
        <fullName evidence="1">tRNA pseudouridylate synthase I</fullName>
    </alternativeName>
    <alternativeName>
        <fullName evidence="1">tRNA-uridine isomerase I</fullName>
    </alternativeName>
</protein>
<comment type="function">
    <text evidence="1">Formation of pseudouridine at positions 38, 39 and 40 in the anticodon stem and loop of transfer RNAs.</text>
</comment>
<comment type="catalytic activity">
    <reaction evidence="1">
        <text>uridine(38/39/40) in tRNA = pseudouridine(38/39/40) in tRNA</text>
        <dbReference type="Rhea" id="RHEA:22376"/>
        <dbReference type="Rhea" id="RHEA-COMP:10085"/>
        <dbReference type="Rhea" id="RHEA-COMP:10087"/>
        <dbReference type="ChEBI" id="CHEBI:65314"/>
        <dbReference type="ChEBI" id="CHEBI:65315"/>
        <dbReference type="EC" id="5.4.99.12"/>
    </reaction>
</comment>
<comment type="subunit">
    <text evidence="1">Homodimer.</text>
</comment>
<comment type="similarity">
    <text evidence="1">Belongs to the tRNA pseudouridine synthase TruA family.</text>
</comment>
<keyword id="KW-0413">Isomerase</keyword>
<keyword id="KW-0819">tRNA processing</keyword>
<evidence type="ECO:0000255" key="1">
    <source>
        <dbReference type="HAMAP-Rule" id="MF_00171"/>
    </source>
</evidence>
<feature type="chain" id="PRO_1000194567" description="tRNA pseudouridine synthase A">
    <location>
        <begin position="1"/>
        <end position="261"/>
    </location>
</feature>
<feature type="active site" description="Nucleophile" evidence="1">
    <location>
        <position position="51"/>
    </location>
</feature>
<feature type="binding site" evidence="1">
    <location>
        <position position="109"/>
    </location>
    <ligand>
        <name>substrate</name>
    </ligand>
</feature>
<gene>
    <name evidence="1" type="primary">truA</name>
    <name type="ordered locus">Sbal223_1617</name>
</gene>
<dbReference type="EC" id="5.4.99.12" evidence="1"/>
<dbReference type="EMBL" id="CP001252">
    <property type="protein sequence ID" value="ACK46122.1"/>
    <property type="molecule type" value="Genomic_DNA"/>
</dbReference>
<dbReference type="RefSeq" id="WP_012587332.1">
    <property type="nucleotide sequence ID" value="NC_011663.1"/>
</dbReference>
<dbReference type="SMR" id="B8EEB7"/>
<dbReference type="KEGG" id="sbp:Sbal223_1617"/>
<dbReference type="HOGENOM" id="CLU_014673_0_2_6"/>
<dbReference type="Proteomes" id="UP000002507">
    <property type="component" value="Chromosome"/>
</dbReference>
<dbReference type="GO" id="GO:0003723">
    <property type="term" value="F:RNA binding"/>
    <property type="evidence" value="ECO:0007669"/>
    <property type="project" value="InterPro"/>
</dbReference>
<dbReference type="GO" id="GO:0160147">
    <property type="term" value="F:tRNA pseudouridine(38-40) synthase activity"/>
    <property type="evidence" value="ECO:0007669"/>
    <property type="project" value="UniProtKB-EC"/>
</dbReference>
<dbReference type="GO" id="GO:0031119">
    <property type="term" value="P:tRNA pseudouridine synthesis"/>
    <property type="evidence" value="ECO:0007669"/>
    <property type="project" value="UniProtKB-UniRule"/>
</dbReference>
<dbReference type="CDD" id="cd02570">
    <property type="entry name" value="PseudoU_synth_EcTruA"/>
    <property type="match status" value="1"/>
</dbReference>
<dbReference type="FunFam" id="3.30.70.580:FF:000001">
    <property type="entry name" value="tRNA pseudouridine synthase A"/>
    <property type="match status" value="1"/>
</dbReference>
<dbReference type="FunFam" id="3.30.70.660:FF:000001">
    <property type="entry name" value="tRNA pseudouridine synthase A"/>
    <property type="match status" value="1"/>
</dbReference>
<dbReference type="Gene3D" id="3.30.70.660">
    <property type="entry name" value="Pseudouridine synthase I, catalytic domain, C-terminal subdomain"/>
    <property type="match status" value="1"/>
</dbReference>
<dbReference type="Gene3D" id="3.30.70.580">
    <property type="entry name" value="Pseudouridine synthase I, catalytic domain, N-terminal subdomain"/>
    <property type="match status" value="1"/>
</dbReference>
<dbReference type="HAMAP" id="MF_00171">
    <property type="entry name" value="TruA"/>
    <property type="match status" value="1"/>
</dbReference>
<dbReference type="InterPro" id="IPR020103">
    <property type="entry name" value="PsdUridine_synth_cat_dom_sf"/>
</dbReference>
<dbReference type="InterPro" id="IPR001406">
    <property type="entry name" value="PsdUridine_synth_TruA"/>
</dbReference>
<dbReference type="InterPro" id="IPR020097">
    <property type="entry name" value="PsdUridine_synth_TruA_a/b_dom"/>
</dbReference>
<dbReference type="InterPro" id="IPR020095">
    <property type="entry name" value="PsdUridine_synth_TruA_C"/>
</dbReference>
<dbReference type="InterPro" id="IPR020094">
    <property type="entry name" value="TruA/RsuA/RluB/E/F_N"/>
</dbReference>
<dbReference type="NCBIfam" id="TIGR00071">
    <property type="entry name" value="hisT_truA"/>
    <property type="match status" value="1"/>
</dbReference>
<dbReference type="PANTHER" id="PTHR11142">
    <property type="entry name" value="PSEUDOURIDYLATE SYNTHASE"/>
    <property type="match status" value="1"/>
</dbReference>
<dbReference type="PANTHER" id="PTHR11142:SF0">
    <property type="entry name" value="TRNA PSEUDOURIDINE SYNTHASE-LIKE 1"/>
    <property type="match status" value="1"/>
</dbReference>
<dbReference type="Pfam" id="PF01416">
    <property type="entry name" value="PseudoU_synth_1"/>
    <property type="match status" value="2"/>
</dbReference>
<dbReference type="PIRSF" id="PIRSF001430">
    <property type="entry name" value="tRNA_psdUrid_synth"/>
    <property type="match status" value="1"/>
</dbReference>
<dbReference type="SUPFAM" id="SSF55120">
    <property type="entry name" value="Pseudouridine synthase"/>
    <property type="match status" value="1"/>
</dbReference>
<organism>
    <name type="scientific">Shewanella baltica (strain OS223)</name>
    <dbReference type="NCBI Taxonomy" id="407976"/>
    <lineage>
        <taxon>Bacteria</taxon>
        <taxon>Pseudomonadati</taxon>
        <taxon>Pseudomonadota</taxon>
        <taxon>Gammaproteobacteria</taxon>
        <taxon>Alteromonadales</taxon>
        <taxon>Shewanellaceae</taxon>
        <taxon>Shewanella</taxon>
    </lineage>
</organism>
<reference key="1">
    <citation type="submission" date="2008-12" db="EMBL/GenBank/DDBJ databases">
        <title>Complete sequence of chromosome of Shewanella baltica OS223.</title>
        <authorList>
            <consortium name="US DOE Joint Genome Institute"/>
            <person name="Lucas S."/>
            <person name="Copeland A."/>
            <person name="Lapidus A."/>
            <person name="Glavina del Rio T."/>
            <person name="Dalin E."/>
            <person name="Tice H."/>
            <person name="Bruce D."/>
            <person name="Goodwin L."/>
            <person name="Pitluck S."/>
            <person name="Chertkov O."/>
            <person name="Meincke L."/>
            <person name="Brettin T."/>
            <person name="Detter J.C."/>
            <person name="Han C."/>
            <person name="Kuske C.R."/>
            <person name="Larimer F."/>
            <person name="Land M."/>
            <person name="Hauser L."/>
            <person name="Kyrpides N."/>
            <person name="Ovchinnikova G."/>
            <person name="Brettar I."/>
            <person name="Rodrigues J."/>
            <person name="Konstantinidis K."/>
            <person name="Tiedje J."/>
        </authorList>
    </citation>
    <scope>NUCLEOTIDE SEQUENCE [LARGE SCALE GENOMIC DNA]</scope>
    <source>
        <strain>OS223</strain>
    </source>
</reference>
<proteinExistence type="inferred from homology"/>
<accession>B8EEB7</accession>
<sequence>MRIALGIEYDGNGYFGWQRQAEVDSVQAQLERALSIVANEPIGVFCAGRTDAGVHATGQVVHFETHAIRNEGAWTLGVNANLPDNIAVRWVKEVDDSFHARFSATARRYRYVIYNHSFRPGILRHGVSHYHGDIDADRMHQAAQALLGEQDFTSFRAVQCQSKTPFRNVHCVNVTRQGMYVIVDIAANAFLHHMVRNIVGSLLEIGLGNQPLTWMGDLLALKDRNQAAATAKPHGLYLVDVTYPEQYQLPKLALGPLFMLD</sequence>